<evidence type="ECO:0000250" key="1"/>
<evidence type="ECO:0000256" key="2">
    <source>
        <dbReference type="SAM" id="MobiDB-lite"/>
    </source>
</evidence>
<evidence type="ECO:0000305" key="3"/>
<feature type="chain" id="PRO_0000409405" description="Tethering factor for nuclear proteasome STS1">
    <location>
        <begin position="1"/>
        <end position="367"/>
    </location>
</feature>
<feature type="region of interest" description="Disordered" evidence="2">
    <location>
        <begin position="1"/>
        <end position="93"/>
    </location>
</feature>
<feature type="compositionally biased region" description="Basic and acidic residues" evidence="2">
    <location>
        <begin position="20"/>
        <end position="31"/>
    </location>
</feature>
<feature type="compositionally biased region" description="Low complexity" evidence="2">
    <location>
        <begin position="36"/>
        <end position="62"/>
    </location>
</feature>
<feature type="compositionally biased region" description="Polar residues" evidence="2">
    <location>
        <begin position="63"/>
        <end position="75"/>
    </location>
</feature>
<name>STS1_CANTT</name>
<keyword id="KW-0963">Cytoplasm</keyword>
<keyword id="KW-0539">Nucleus</keyword>
<keyword id="KW-0653">Protein transport</keyword>
<keyword id="KW-1185">Reference proteome</keyword>
<keyword id="KW-0813">Transport</keyword>
<gene>
    <name type="primary">STS1</name>
    <name type="ORF">CTRG_03376</name>
</gene>
<accession>C5MBD4</accession>
<sequence>MMSAGFQWGGVPNKGLTQEHSTDKSTTDSHIPRYGSSSSSSSSSSSSSSSSYALTSSSASSSTTPHQTISHSPLATTLKKRKREDTSDVNLPINNGISSKRFVHPTASSKYKRSKTPKIIGQPLPLHRLIESLDKSNLQKLVQDLIIIHPELQSTMSKIAPKPTIQDSLDLLHEKFNMIISHLPYKCDVESDYSYLRIKPHLQEFLSCVSDFILNYLPPLESNMIHSLQFLEEVTKMIIHNLPNFTNQEFQYTKSTALDQLANCWLIVLSQSDNNGEKEDVAADIGVVVKVIQELELLEKLQKHNEVSLNKFQKVIDYCNDKLEQHELIINNGNAASVNNNGAVPASLSDLISVDYSKYSLTNTSSI</sequence>
<proteinExistence type="inferred from homology"/>
<dbReference type="EMBL" id="GG692398">
    <property type="protein sequence ID" value="EER32951.1"/>
    <property type="molecule type" value="Genomic_DNA"/>
</dbReference>
<dbReference type="RefSeq" id="XP_002549079.1">
    <property type="nucleotide sequence ID" value="XM_002549033.1"/>
</dbReference>
<dbReference type="SMR" id="C5MBD4"/>
<dbReference type="STRING" id="294747.C5MBD4"/>
<dbReference type="EnsemblFungi" id="CTRG_03376-t43_1">
    <property type="protein sequence ID" value="CTRG_03376-t43_1-p1"/>
    <property type="gene ID" value="CTRG_03376"/>
</dbReference>
<dbReference type="GeneID" id="8301971"/>
<dbReference type="KEGG" id="ctp:CTRG_03376"/>
<dbReference type="VEuPathDB" id="FungiDB:CTRG_03376"/>
<dbReference type="eggNOG" id="ENOG502RNK4">
    <property type="taxonomic scope" value="Eukaryota"/>
</dbReference>
<dbReference type="HOGENOM" id="CLU_054606_2_0_1"/>
<dbReference type="OrthoDB" id="10061064at2759"/>
<dbReference type="Proteomes" id="UP000002037">
    <property type="component" value="Unassembled WGS sequence"/>
</dbReference>
<dbReference type="GO" id="GO:0005737">
    <property type="term" value="C:cytoplasm"/>
    <property type="evidence" value="ECO:0007669"/>
    <property type="project" value="UniProtKB-SubCell"/>
</dbReference>
<dbReference type="GO" id="GO:0031965">
    <property type="term" value="C:nuclear membrane"/>
    <property type="evidence" value="ECO:0007669"/>
    <property type="project" value="TreeGrafter"/>
</dbReference>
<dbReference type="GO" id="GO:0070628">
    <property type="term" value="F:proteasome binding"/>
    <property type="evidence" value="ECO:0007669"/>
    <property type="project" value="TreeGrafter"/>
</dbReference>
<dbReference type="GO" id="GO:0071630">
    <property type="term" value="P:nuclear protein quality control by the ubiquitin-proteasome system"/>
    <property type="evidence" value="ECO:0007669"/>
    <property type="project" value="InterPro"/>
</dbReference>
<dbReference type="GO" id="GO:0031144">
    <property type="term" value="P:proteasome localization"/>
    <property type="evidence" value="ECO:0007669"/>
    <property type="project" value="InterPro"/>
</dbReference>
<dbReference type="GO" id="GO:0015031">
    <property type="term" value="P:protein transport"/>
    <property type="evidence" value="ECO:0007669"/>
    <property type="project" value="UniProtKB-KW"/>
</dbReference>
<dbReference type="Gene3D" id="1.20.58.1590">
    <property type="entry name" value="Tethering factor for nuclear proteasome Cut8/Sts1"/>
    <property type="match status" value="1"/>
</dbReference>
<dbReference type="InterPro" id="IPR013868">
    <property type="entry name" value="Cut8/Sts1_fam"/>
</dbReference>
<dbReference type="InterPro" id="IPR038422">
    <property type="entry name" value="Cut8/Sts1_sf"/>
</dbReference>
<dbReference type="PANTHER" id="PTHR28032">
    <property type="entry name" value="FI02826P"/>
    <property type="match status" value="1"/>
</dbReference>
<dbReference type="PANTHER" id="PTHR28032:SF1">
    <property type="entry name" value="FI02826P"/>
    <property type="match status" value="1"/>
</dbReference>
<dbReference type="Pfam" id="PF08559">
    <property type="entry name" value="Cut8"/>
    <property type="match status" value="1"/>
</dbReference>
<comment type="function">
    <text evidence="1">Involved in ubiquitin-mediated protein degradation. Regulatory factor in the ubiquitin/proteasome pathway that controls the turnover of proteasome substrates. Targets proteasomes to the nucleus and facilitates the degradation of nuclear proteins (By similarity).</text>
</comment>
<comment type="subunit">
    <text evidence="1">Binds the proteasome.</text>
</comment>
<comment type="subcellular location">
    <subcellularLocation>
        <location evidence="1">Cytoplasm</location>
    </subcellularLocation>
    <subcellularLocation>
        <location evidence="1">Nucleus</location>
    </subcellularLocation>
</comment>
<comment type="similarity">
    <text evidence="3">Belongs to the cut8/STS1 family.</text>
</comment>
<organism>
    <name type="scientific">Candida tropicalis (strain ATCC MYA-3404 / T1)</name>
    <name type="common">Yeast</name>
    <dbReference type="NCBI Taxonomy" id="294747"/>
    <lineage>
        <taxon>Eukaryota</taxon>
        <taxon>Fungi</taxon>
        <taxon>Dikarya</taxon>
        <taxon>Ascomycota</taxon>
        <taxon>Saccharomycotina</taxon>
        <taxon>Pichiomycetes</taxon>
        <taxon>Debaryomycetaceae</taxon>
        <taxon>Candida/Lodderomyces clade</taxon>
        <taxon>Candida</taxon>
    </lineage>
</organism>
<reference key="1">
    <citation type="journal article" date="2009" name="Nature">
        <title>Evolution of pathogenicity and sexual reproduction in eight Candida genomes.</title>
        <authorList>
            <person name="Butler G."/>
            <person name="Rasmussen M.D."/>
            <person name="Lin M.F."/>
            <person name="Santos M.A.S."/>
            <person name="Sakthikumar S."/>
            <person name="Munro C.A."/>
            <person name="Rheinbay E."/>
            <person name="Grabherr M."/>
            <person name="Forche A."/>
            <person name="Reedy J.L."/>
            <person name="Agrafioti I."/>
            <person name="Arnaud M.B."/>
            <person name="Bates S."/>
            <person name="Brown A.J.P."/>
            <person name="Brunke S."/>
            <person name="Costanzo M.C."/>
            <person name="Fitzpatrick D.A."/>
            <person name="de Groot P.W.J."/>
            <person name="Harris D."/>
            <person name="Hoyer L.L."/>
            <person name="Hube B."/>
            <person name="Klis F.M."/>
            <person name="Kodira C."/>
            <person name="Lennard N."/>
            <person name="Logue M.E."/>
            <person name="Martin R."/>
            <person name="Neiman A.M."/>
            <person name="Nikolaou E."/>
            <person name="Quail M.A."/>
            <person name="Quinn J."/>
            <person name="Santos M.C."/>
            <person name="Schmitzberger F.F."/>
            <person name="Sherlock G."/>
            <person name="Shah P."/>
            <person name="Silverstein K.A.T."/>
            <person name="Skrzypek M.S."/>
            <person name="Soll D."/>
            <person name="Staggs R."/>
            <person name="Stansfield I."/>
            <person name="Stumpf M.P.H."/>
            <person name="Sudbery P.E."/>
            <person name="Srikantha T."/>
            <person name="Zeng Q."/>
            <person name="Berman J."/>
            <person name="Berriman M."/>
            <person name="Heitman J."/>
            <person name="Gow N.A.R."/>
            <person name="Lorenz M.C."/>
            <person name="Birren B.W."/>
            <person name="Kellis M."/>
            <person name="Cuomo C.A."/>
        </authorList>
    </citation>
    <scope>NUCLEOTIDE SEQUENCE [LARGE SCALE GENOMIC DNA]</scope>
    <source>
        <strain>ATCC MYA-3404 / T1</strain>
    </source>
</reference>
<protein>
    <recommendedName>
        <fullName>Tethering factor for nuclear proteasome STS1</fullName>
    </recommendedName>
</protein>